<name>RL17_RICTY</name>
<gene>
    <name evidence="1" type="primary">rplQ</name>
    <name type="ordered locus">RT0626</name>
</gene>
<organism>
    <name type="scientific">Rickettsia typhi (strain ATCC VR-144 / Wilmington)</name>
    <dbReference type="NCBI Taxonomy" id="257363"/>
    <lineage>
        <taxon>Bacteria</taxon>
        <taxon>Pseudomonadati</taxon>
        <taxon>Pseudomonadota</taxon>
        <taxon>Alphaproteobacteria</taxon>
        <taxon>Rickettsiales</taxon>
        <taxon>Rickettsiaceae</taxon>
        <taxon>Rickettsieae</taxon>
        <taxon>Rickettsia</taxon>
        <taxon>typhus group</taxon>
    </lineage>
</organism>
<comment type="subunit">
    <text evidence="1">Part of the 50S ribosomal subunit. Contacts protein L32.</text>
</comment>
<comment type="similarity">
    <text evidence="1">Belongs to the bacterial ribosomal protein bL17 family.</text>
</comment>
<protein>
    <recommendedName>
        <fullName evidence="1">Large ribosomal subunit protein bL17</fullName>
    </recommendedName>
    <alternativeName>
        <fullName evidence="2">50S ribosomal protein L17</fullName>
    </alternativeName>
</protein>
<proteinExistence type="inferred from homology"/>
<accession>Q68WA3</accession>
<keyword id="KW-0687">Ribonucleoprotein</keyword>
<keyword id="KW-0689">Ribosomal protein</keyword>
<sequence length="137" mass="15713">MRHRIKGRRLNVTSSHRQSMLANMAVALVMHEQIKTTLPKAKELRPYIEAIITKAKKADLTVRRSVLSKIKDKKAVEKIINILGVRYKDRPGGYTRIVKSGFRYGDLAPIAYIEFVDRDINAKGKKMYQDASEEIKN</sequence>
<evidence type="ECO:0000255" key="1">
    <source>
        <dbReference type="HAMAP-Rule" id="MF_01368"/>
    </source>
</evidence>
<evidence type="ECO:0000305" key="2"/>
<reference key="1">
    <citation type="journal article" date="2004" name="J. Bacteriol.">
        <title>Complete genome sequence of Rickettsia typhi and comparison with sequences of other Rickettsiae.</title>
        <authorList>
            <person name="McLeod M.P."/>
            <person name="Qin X."/>
            <person name="Karpathy S.E."/>
            <person name="Gioia J."/>
            <person name="Highlander S.K."/>
            <person name="Fox G.E."/>
            <person name="McNeill T.Z."/>
            <person name="Jiang H."/>
            <person name="Muzny D."/>
            <person name="Jacob L.S."/>
            <person name="Hawes A.C."/>
            <person name="Sodergren E."/>
            <person name="Gill R."/>
            <person name="Hume J."/>
            <person name="Morgan M."/>
            <person name="Fan G."/>
            <person name="Amin A.G."/>
            <person name="Gibbs R.A."/>
            <person name="Hong C."/>
            <person name="Yu X.-J."/>
            <person name="Walker D.H."/>
            <person name="Weinstock G.M."/>
        </authorList>
    </citation>
    <scope>NUCLEOTIDE SEQUENCE [LARGE SCALE GENOMIC DNA]</scope>
    <source>
        <strain>ATCC VR-144 / Wilmington</strain>
    </source>
</reference>
<feature type="chain" id="PRO_0000272385" description="Large ribosomal subunit protein bL17">
    <location>
        <begin position="1"/>
        <end position="137"/>
    </location>
</feature>
<dbReference type="EMBL" id="AE017197">
    <property type="protein sequence ID" value="AAU04089.1"/>
    <property type="molecule type" value="Genomic_DNA"/>
</dbReference>
<dbReference type="RefSeq" id="WP_011191069.1">
    <property type="nucleotide sequence ID" value="NC_006142.1"/>
</dbReference>
<dbReference type="SMR" id="Q68WA3"/>
<dbReference type="KEGG" id="rty:RT0626"/>
<dbReference type="eggNOG" id="COG0203">
    <property type="taxonomic scope" value="Bacteria"/>
</dbReference>
<dbReference type="HOGENOM" id="CLU_074407_2_0_5"/>
<dbReference type="OrthoDB" id="9809073at2"/>
<dbReference type="Proteomes" id="UP000000604">
    <property type="component" value="Chromosome"/>
</dbReference>
<dbReference type="GO" id="GO:0022625">
    <property type="term" value="C:cytosolic large ribosomal subunit"/>
    <property type="evidence" value="ECO:0007669"/>
    <property type="project" value="TreeGrafter"/>
</dbReference>
<dbReference type="GO" id="GO:0003735">
    <property type="term" value="F:structural constituent of ribosome"/>
    <property type="evidence" value="ECO:0007669"/>
    <property type="project" value="InterPro"/>
</dbReference>
<dbReference type="GO" id="GO:0006412">
    <property type="term" value="P:translation"/>
    <property type="evidence" value="ECO:0007669"/>
    <property type="project" value="UniProtKB-UniRule"/>
</dbReference>
<dbReference type="FunFam" id="3.90.1030.10:FF:000001">
    <property type="entry name" value="50S ribosomal protein L17"/>
    <property type="match status" value="1"/>
</dbReference>
<dbReference type="Gene3D" id="3.90.1030.10">
    <property type="entry name" value="Ribosomal protein L17"/>
    <property type="match status" value="1"/>
</dbReference>
<dbReference type="HAMAP" id="MF_01368">
    <property type="entry name" value="Ribosomal_bL17"/>
    <property type="match status" value="1"/>
</dbReference>
<dbReference type="InterPro" id="IPR000456">
    <property type="entry name" value="Ribosomal_bL17"/>
</dbReference>
<dbReference type="InterPro" id="IPR047859">
    <property type="entry name" value="Ribosomal_bL17_CS"/>
</dbReference>
<dbReference type="InterPro" id="IPR036373">
    <property type="entry name" value="Ribosomal_bL17_sf"/>
</dbReference>
<dbReference type="NCBIfam" id="TIGR00059">
    <property type="entry name" value="L17"/>
    <property type="match status" value="1"/>
</dbReference>
<dbReference type="PANTHER" id="PTHR14413:SF16">
    <property type="entry name" value="LARGE RIBOSOMAL SUBUNIT PROTEIN BL17M"/>
    <property type="match status" value="1"/>
</dbReference>
<dbReference type="PANTHER" id="PTHR14413">
    <property type="entry name" value="RIBOSOMAL PROTEIN L17"/>
    <property type="match status" value="1"/>
</dbReference>
<dbReference type="Pfam" id="PF01196">
    <property type="entry name" value="Ribosomal_L17"/>
    <property type="match status" value="1"/>
</dbReference>
<dbReference type="SUPFAM" id="SSF64263">
    <property type="entry name" value="Prokaryotic ribosomal protein L17"/>
    <property type="match status" value="1"/>
</dbReference>
<dbReference type="PROSITE" id="PS01167">
    <property type="entry name" value="RIBOSOMAL_L17"/>
    <property type="match status" value="1"/>
</dbReference>